<dbReference type="PIR" id="A02588">
    <property type="entry name" value="HSGS5"/>
</dbReference>
<dbReference type="SMR" id="P02258"/>
<dbReference type="GO" id="GO:0000786">
    <property type="term" value="C:nucleosome"/>
    <property type="evidence" value="ECO:0007669"/>
    <property type="project" value="InterPro"/>
</dbReference>
<dbReference type="GO" id="GO:0005634">
    <property type="term" value="C:nucleus"/>
    <property type="evidence" value="ECO:0007669"/>
    <property type="project" value="UniProtKB-SubCell"/>
</dbReference>
<dbReference type="GO" id="GO:0003690">
    <property type="term" value="F:double-stranded DNA binding"/>
    <property type="evidence" value="ECO:0007669"/>
    <property type="project" value="TreeGrafter"/>
</dbReference>
<dbReference type="GO" id="GO:0031492">
    <property type="term" value="F:nucleosomal DNA binding"/>
    <property type="evidence" value="ECO:0007669"/>
    <property type="project" value="TreeGrafter"/>
</dbReference>
<dbReference type="GO" id="GO:0030527">
    <property type="term" value="F:structural constituent of chromatin"/>
    <property type="evidence" value="ECO:0007669"/>
    <property type="project" value="InterPro"/>
</dbReference>
<dbReference type="GO" id="GO:0030261">
    <property type="term" value="P:chromosome condensation"/>
    <property type="evidence" value="ECO:0007669"/>
    <property type="project" value="UniProtKB-KW"/>
</dbReference>
<dbReference type="GO" id="GO:0045910">
    <property type="term" value="P:negative regulation of DNA recombination"/>
    <property type="evidence" value="ECO:0007669"/>
    <property type="project" value="TreeGrafter"/>
</dbReference>
<dbReference type="GO" id="GO:0006334">
    <property type="term" value="P:nucleosome assembly"/>
    <property type="evidence" value="ECO:0007669"/>
    <property type="project" value="InterPro"/>
</dbReference>
<dbReference type="CDD" id="cd00073">
    <property type="entry name" value="H15"/>
    <property type="match status" value="1"/>
</dbReference>
<dbReference type="FunFam" id="1.10.10.10:FF:000140">
    <property type="entry name" value="Histone H1.0"/>
    <property type="match status" value="1"/>
</dbReference>
<dbReference type="Gene3D" id="1.10.10.10">
    <property type="entry name" value="Winged helix-like DNA-binding domain superfamily/Winged helix DNA-binding domain"/>
    <property type="match status" value="1"/>
</dbReference>
<dbReference type="InterPro" id="IPR005819">
    <property type="entry name" value="H1/H5"/>
</dbReference>
<dbReference type="InterPro" id="IPR005818">
    <property type="entry name" value="Histone_H1/H5_H15"/>
</dbReference>
<dbReference type="InterPro" id="IPR036388">
    <property type="entry name" value="WH-like_DNA-bd_sf"/>
</dbReference>
<dbReference type="InterPro" id="IPR036390">
    <property type="entry name" value="WH_DNA-bd_sf"/>
</dbReference>
<dbReference type="PANTHER" id="PTHR11467">
    <property type="entry name" value="HISTONE H1"/>
    <property type="match status" value="1"/>
</dbReference>
<dbReference type="PANTHER" id="PTHR11467:SF182">
    <property type="entry name" value="HISTONE H1.0"/>
    <property type="match status" value="1"/>
</dbReference>
<dbReference type="Pfam" id="PF00538">
    <property type="entry name" value="Linker_histone"/>
    <property type="match status" value="1"/>
</dbReference>
<dbReference type="PRINTS" id="PR00624">
    <property type="entry name" value="HISTONEH5"/>
</dbReference>
<dbReference type="SMART" id="SM00526">
    <property type="entry name" value="H15"/>
    <property type="match status" value="1"/>
</dbReference>
<dbReference type="SUPFAM" id="SSF46785">
    <property type="entry name" value="Winged helix' DNA-binding domain"/>
    <property type="match status" value="1"/>
</dbReference>
<dbReference type="PROSITE" id="PS51504">
    <property type="entry name" value="H15"/>
    <property type="match status" value="1"/>
</dbReference>
<keyword id="KW-0158">Chromosome</keyword>
<keyword id="KW-0903">Direct protein sequencing</keyword>
<keyword id="KW-0226">DNA condensation</keyword>
<keyword id="KW-0238">DNA-binding</keyword>
<keyword id="KW-0539">Nucleus</keyword>
<reference key="1">
    <citation type="journal article" date="1979" name="Biochem. Biophys. Res. Commun.">
        <title>Complete amino acid sequence of goose erythrocyte H5 histone and the homology between H1 and H5 histones.</title>
        <authorList>
            <person name="Yaguchi M."/>
            <person name="Roy C."/>
            <person name="Seligy V.L."/>
        </authorList>
    </citation>
    <scope>PROTEIN SEQUENCE</scope>
</reference>
<evidence type="ECO:0000255" key="1">
    <source>
        <dbReference type="PROSITE-ProRule" id="PRU00837"/>
    </source>
</evidence>
<evidence type="ECO:0000256" key="2">
    <source>
        <dbReference type="SAM" id="MobiDB-lite"/>
    </source>
</evidence>
<protein>
    <recommendedName>
        <fullName>Histone H5</fullName>
    </recommendedName>
</protein>
<comment type="function">
    <text>Histone H5 performs the same function as H1, being necessary for the condensation of nucleosome chains into higher order structures, and replaces histone H1 in certain cells.</text>
</comment>
<comment type="subcellular location">
    <subcellularLocation>
        <location>Nucleus</location>
    </subcellularLocation>
    <subcellularLocation>
        <location>Chromosome</location>
    </subcellularLocation>
</comment>
<comment type="tissue specificity">
    <text>Erythroid cells.</text>
</comment>
<comment type="similarity">
    <text evidence="1">Belongs to the histone H1/H5 family.</text>
</comment>
<sequence length="193" mass="20900">TDSPIPAPAPAAKPKRARAPRKPASHPTYSEMIAAAIRADKSRGGSSRQSIQKYVKSHYKVGQHADLQIKLAIRRLLTTGVLKQTKGVGASGSFRLAKGDKAKRSPAGRKKKKKAARKSTSPKKAARPRKARSPAKKPKAAARKARKKSRASPKKAKKPKTVKAKSLKTSKPKKARRSKPRAKSGARKSPKKK</sequence>
<accession>P02258</accession>
<name>H5_ANSAN</name>
<proteinExistence type="evidence at protein level"/>
<feature type="chain" id="PRO_0000196003" description="Histone H5">
    <location>
        <begin position="1"/>
        <end position="193"/>
    </location>
</feature>
<feature type="domain" description="H15" evidence="1">
    <location>
        <begin position="25"/>
        <end position="98"/>
    </location>
</feature>
<feature type="region of interest" description="Disordered" evidence="2">
    <location>
        <begin position="1"/>
        <end position="29"/>
    </location>
</feature>
<feature type="region of interest" description="Disordered" evidence="2">
    <location>
        <begin position="80"/>
        <end position="193"/>
    </location>
</feature>
<feature type="compositionally biased region" description="Pro residues" evidence="2">
    <location>
        <begin position="1"/>
        <end position="11"/>
    </location>
</feature>
<feature type="compositionally biased region" description="Basic residues" evidence="2">
    <location>
        <begin position="13"/>
        <end position="24"/>
    </location>
</feature>
<feature type="compositionally biased region" description="Basic residues" evidence="2">
    <location>
        <begin position="104"/>
        <end position="193"/>
    </location>
</feature>
<organism>
    <name type="scientific">Anser anser anser</name>
    <name type="common">Western greylag goose</name>
    <dbReference type="NCBI Taxonomy" id="8844"/>
    <lineage>
        <taxon>Eukaryota</taxon>
        <taxon>Metazoa</taxon>
        <taxon>Chordata</taxon>
        <taxon>Craniata</taxon>
        <taxon>Vertebrata</taxon>
        <taxon>Euteleostomi</taxon>
        <taxon>Archelosauria</taxon>
        <taxon>Archosauria</taxon>
        <taxon>Dinosauria</taxon>
        <taxon>Saurischia</taxon>
        <taxon>Theropoda</taxon>
        <taxon>Coelurosauria</taxon>
        <taxon>Aves</taxon>
        <taxon>Neognathae</taxon>
        <taxon>Galloanserae</taxon>
        <taxon>Anseriformes</taxon>
        <taxon>Anatidae</taxon>
        <taxon>Anserinae</taxon>
        <taxon>Anser</taxon>
    </lineage>
</organism>